<organism>
    <name type="scientific">Aspergillus clavatus (strain ATCC 1007 / CBS 513.65 / DSM 816 / NCTC 3887 / NRRL 1 / QM 1276 / 107)</name>
    <dbReference type="NCBI Taxonomy" id="344612"/>
    <lineage>
        <taxon>Eukaryota</taxon>
        <taxon>Fungi</taxon>
        <taxon>Dikarya</taxon>
        <taxon>Ascomycota</taxon>
        <taxon>Pezizomycotina</taxon>
        <taxon>Eurotiomycetes</taxon>
        <taxon>Eurotiomycetidae</taxon>
        <taxon>Eurotiales</taxon>
        <taxon>Aspergillaceae</taxon>
        <taxon>Aspergillus</taxon>
        <taxon>Aspergillus subgen. Fumigati</taxon>
    </lineage>
</organism>
<comment type="function">
    <text evidence="1">ATP-binding RNA helicase involved in the biogenesis of 60S ribosomal subunits and is required for the normal formation of 25S and 5.8S rRNAs.</text>
</comment>
<comment type="catalytic activity">
    <reaction>
        <text>ATP + H2O = ADP + phosphate + H(+)</text>
        <dbReference type="Rhea" id="RHEA:13065"/>
        <dbReference type="ChEBI" id="CHEBI:15377"/>
        <dbReference type="ChEBI" id="CHEBI:15378"/>
        <dbReference type="ChEBI" id="CHEBI:30616"/>
        <dbReference type="ChEBI" id="CHEBI:43474"/>
        <dbReference type="ChEBI" id="CHEBI:456216"/>
        <dbReference type="EC" id="3.6.4.13"/>
    </reaction>
</comment>
<comment type="subcellular location">
    <subcellularLocation>
        <location evidence="1">Nucleus</location>
        <location evidence="1">Nucleolus</location>
    </subcellularLocation>
</comment>
<comment type="domain">
    <text>The Q motif is unique to and characteristic of the DEAD box family of RNA helicases and controls ATP binding and hydrolysis.</text>
</comment>
<comment type="similarity">
    <text evidence="5">Belongs to the DEAD box helicase family. DDX24/MAK5 subfamily.</text>
</comment>
<evidence type="ECO:0000250" key="1"/>
<evidence type="ECO:0000255" key="2">
    <source>
        <dbReference type="PROSITE-ProRule" id="PRU00541"/>
    </source>
</evidence>
<evidence type="ECO:0000255" key="3">
    <source>
        <dbReference type="PROSITE-ProRule" id="PRU00542"/>
    </source>
</evidence>
<evidence type="ECO:0000256" key="4">
    <source>
        <dbReference type="SAM" id="MobiDB-lite"/>
    </source>
</evidence>
<evidence type="ECO:0000305" key="5"/>
<dbReference type="EC" id="3.6.4.13"/>
<dbReference type="EMBL" id="DS027060">
    <property type="protein sequence ID" value="EAW06655.1"/>
    <property type="molecule type" value="Genomic_DNA"/>
</dbReference>
<dbReference type="RefSeq" id="XP_001268081.1">
    <property type="nucleotide sequence ID" value="XM_001268080.1"/>
</dbReference>
<dbReference type="SMR" id="A1CTL8"/>
<dbReference type="STRING" id="344612.A1CTL8"/>
<dbReference type="EnsemblFungi" id="EAW06655">
    <property type="protein sequence ID" value="EAW06655"/>
    <property type="gene ID" value="ACLA_083500"/>
</dbReference>
<dbReference type="GeneID" id="4700318"/>
<dbReference type="KEGG" id="act:ACLA_083500"/>
<dbReference type="VEuPathDB" id="FungiDB:ACLA_083500"/>
<dbReference type="eggNOG" id="KOG0347">
    <property type="taxonomic scope" value="Eukaryota"/>
</dbReference>
<dbReference type="HOGENOM" id="CLU_003041_13_0_1"/>
<dbReference type="OMA" id="QMIQKAR"/>
<dbReference type="OrthoDB" id="4310724at2759"/>
<dbReference type="Proteomes" id="UP000006701">
    <property type="component" value="Unassembled WGS sequence"/>
</dbReference>
<dbReference type="GO" id="GO:0005730">
    <property type="term" value="C:nucleolus"/>
    <property type="evidence" value="ECO:0007669"/>
    <property type="project" value="UniProtKB-SubCell"/>
</dbReference>
<dbReference type="GO" id="GO:0005524">
    <property type="term" value="F:ATP binding"/>
    <property type="evidence" value="ECO:0007669"/>
    <property type="project" value="UniProtKB-KW"/>
</dbReference>
<dbReference type="GO" id="GO:0016887">
    <property type="term" value="F:ATP hydrolysis activity"/>
    <property type="evidence" value="ECO:0007669"/>
    <property type="project" value="RHEA"/>
</dbReference>
<dbReference type="GO" id="GO:0003723">
    <property type="term" value="F:RNA binding"/>
    <property type="evidence" value="ECO:0007669"/>
    <property type="project" value="UniProtKB-KW"/>
</dbReference>
<dbReference type="GO" id="GO:0003724">
    <property type="term" value="F:RNA helicase activity"/>
    <property type="evidence" value="ECO:0007669"/>
    <property type="project" value="UniProtKB-EC"/>
</dbReference>
<dbReference type="GO" id="GO:0006364">
    <property type="term" value="P:rRNA processing"/>
    <property type="evidence" value="ECO:0007669"/>
    <property type="project" value="UniProtKB-KW"/>
</dbReference>
<dbReference type="CDD" id="cd17946">
    <property type="entry name" value="DEADc_DDX24"/>
    <property type="match status" value="1"/>
</dbReference>
<dbReference type="CDD" id="cd18787">
    <property type="entry name" value="SF2_C_DEAD"/>
    <property type="match status" value="1"/>
</dbReference>
<dbReference type="Gene3D" id="3.40.50.300">
    <property type="entry name" value="P-loop containing nucleotide triphosphate hydrolases"/>
    <property type="match status" value="2"/>
</dbReference>
<dbReference type="InterPro" id="IPR011545">
    <property type="entry name" value="DEAD/DEAH_box_helicase_dom"/>
</dbReference>
<dbReference type="InterPro" id="IPR014001">
    <property type="entry name" value="Helicase_ATP-bd"/>
</dbReference>
<dbReference type="InterPro" id="IPR001650">
    <property type="entry name" value="Helicase_C-like"/>
</dbReference>
<dbReference type="InterPro" id="IPR027417">
    <property type="entry name" value="P-loop_NTPase"/>
</dbReference>
<dbReference type="InterPro" id="IPR000629">
    <property type="entry name" value="RNA-helicase_DEAD-box_CS"/>
</dbReference>
<dbReference type="InterPro" id="IPR014014">
    <property type="entry name" value="RNA_helicase_DEAD_Q_motif"/>
</dbReference>
<dbReference type="PANTHER" id="PTHR24031">
    <property type="entry name" value="RNA HELICASE"/>
    <property type="match status" value="1"/>
</dbReference>
<dbReference type="Pfam" id="PF00270">
    <property type="entry name" value="DEAD"/>
    <property type="match status" value="1"/>
</dbReference>
<dbReference type="Pfam" id="PF00271">
    <property type="entry name" value="Helicase_C"/>
    <property type="match status" value="1"/>
</dbReference>
<dbReference type="SMART" id="SM00487">
    <property type="entry name" value="DEXDc"/>
    <property type="match status" value="1"/>
</dbReference>
<dbReference type="SMART" id="SM00490">
    <property type="entry name" value="HELICc"/>
    <property type="match status" value="1"/>
</dbReference>
<dbReference type="SUPFAM" id="SSF52540">
    <property type="entry name" value="P-loop containing nucleoside triphosphate hydrolases"/>
    <property type="match status" value="1"/>
</dbReference>
<dbReference type="PROSITE" id="PS00039">
    <property type="entry name" value="DEAD_ATP_HELICASE"/>
    <property type="match status" value="1"/>
</dbReference>
<dbReference type="PROSITE" id="PS51192">
    <property type="entry name" value="HELICASE_ATP_BIND_1"/>
    <property type="match status" value="1"/>
</dbReference>
<dbReference type="PROSITE" id="PS51194">
    <property type="entry name" value="HELICASE_CTER"/>
    <property type="match status" value="1"/>
</dbReference>
<dbReference type="PROSITE" id="PS51195">
    <property type="entry name" value="Q_MOTIF"/>
    <property type="match status" value="1"/>
</dbReference>
<keyword id="KW-0067">ATP-binding</keyword>
<keyword id="KW-0347">Helicase</keyword>
<keyword id="KW-0378">Hydrolase</keyword>
<keyword id="KW-0547">Nucleotide-binding</keyword>
<keyword id="KW-0539">Nucleus</keyword>
<keyword id="KW-1185">Reference proteome</keyword>
<keyword id="KW-0690">Ribosome biogenesis</keyword>
<keyword id="KW-0694">RNA-binding</keyword>
<keyword id="KW-0698">rRNA processing</keyword>
<gene>
    <name type="primary">mak5</name>
    <name type="ORF">ACLA_083500</name>
</gene>
<protein>
    <recommendedName>
        <fullName>ATP-dependent RNA helicase mak5</fullName>
        <ecNumber>3.6.4.13</ecNumber>
    </recommendedName>
</protein>
<sequence>MGQKRQRDSKSSGFQSKKRKRAANDNAAADANDGWDGIVGADELNWTEVALPDRLEDAGGFFGLEEIEGVDIVRNPGNGEVRFKAKAGKPKKSVLKTKAPEEEETTHDDEWSGFSDNDTDAPETKPSPAVEEVGESDKKVDLKEAKEANKKDKKKEAKQLKKEQKEKGSAIQHDSSIKAGMSFAALQDAEEDDGVDVSAWDALNLSTELLTGISKMKFTSPTAVQAACIPHILDGHDVVGKASTGSGKTLAFGIPILEHYLEKNRDGHGDIIGKKDKKDSTPIALILSPTRELAHQLAKHIGELVTQAPGVNARIALLTGGLSVQKQQRLLAGADIVIGTPGRVWEIMSTGQGLIRKMQKIKFLVVDEADRLLSEGHFKEVEEIIGALDRVEDGDVLDEEDEAPEEESDPRSERQTLVFSATFHRDLQQKLAGKGKWTGGDIMNKKESMDYLLQKLNFREEKPKFIDTNPVSQMAENLKEGIVECGAMEKDLFLYTLLLYHPKHRTLVFTNSISAVRRLAQLLQALQLPALALHSSMAQKARLRSVERFSSPTANPGTILIATDVAARGLDIKGIDLVIHYHAPRTADTYVHRSGRTARAGASGKSVIICGPDEMVGVVRLAAKVHANMANGKRLPLESLELDRRVVGRVKPRVSLASRIVDANIAKEKISSEDNWLRNAAEDLGVEYDSEEFDEAEGKGRGRGRGRQQKQKEAGSVSKAELAGLRAELKQLLSQRVNVGVSERYLTAGRVDIEALLRGEGNASFLGPVDPLGF</sequence>
<accession>A1CTL8</accession>
<name>MAK5_ASPCL</name>
<feature type="chain" id="PRO_0000282484" description="ATP-dependent RNA helicase mak5">
    <location>
        <begin position="1"/>
        <end position="774"/>
    </location>
</feature>
<feature type="domain" description="Helicase ATP-binding" evidence="2">
    <location>
        <begin position="229"/>
        <end position="441"/>
    </location>
</feature>
<feature type="domain" description="Helicase C-terminal" evidence="3">
    <location>
        <begin position="493"/>
        <end position="643"/>
    </location>
</feature>
<feature type="region of interest" description="Disordered" evidence="4">
    <location>
        <begin position="1"/>
        <end position="38"/>
    </location>
</feature>
<feature type="region of interest" description="Disordered" evidence="4">
    <location>
        <begin position="73"/>
        <end position="174"/>
    </location>
</feature>
<feature type="region of interest" description="Disordered" evidence="4">
    <location>
        <begin position="395"/>
        <end position="414"/>
    </location>
</feature>
<feature type="region of interest" description="Disordered" evidence="4">
    <location>
        <begin position="689"/>
        <end position="717"/>
    </location>
</feature>
<feature type="short sequence motif" description="Q motif">
    <location>
        <begin position="198"/>
        <end position="226"/>
    </location>
</feature>
<feature type="short sequence motif" description="DEAD box">
    <location>
        <begin position="367"/>
        <end position="370"/>
    </location>
</feature>
<feature type="compositionally biased region" description="Basic and acidic residues" evidence="4">
    <location>
        <begin position="1"/>
        <end position="10"/>
    </location>
</feature>
<feature type="compositionally biased region" description="Basic residues" evidence="4">
    <location>
        <begin position="84"/>
        <end position="95"/>
    </location>
</feature>
<feature type="compositionally biased region" description="Basic and acidic residues" evidence="4">
    <location>
        <begin position="135"/>
        <end position="168"/>
    </location>
</feature>
<feature type="compositionally biased region" description="Acidic residues" evidence="4">
    <location>
        <begin position="395"/>
        <end position="408"/>
    </location>
</feature>
<feature type="binding site" evidence="2">
    <location>
        <begin position="242"/>
        <end position="249"/>
    </location>
    <ligand>
        <name>ATP</name>
        <dbReference type="ChEBI" id="CHEBI:30616"/>
    </ligand>
</feature>
<reference key="1">
    <citation type="journal article" date="2008" name="PLoS Genet.">
        <title>Genomic islands in the pathogenic filamentous fungus Aspergillus fumigatus.</title>
        <authorList>
            <person name="Fedorova N.D."/>
            <person name="Khaldi N."/>
            <person name="Joardar V.S."/>
            <person name="Maiti R."/>
            <person name="Amedeo P."/>
            <person name="Anderson M.J."/>
            <person name="Crabtree J."/>
            <person name="Silva J.C."/>
            <person name="Badger J.H."/>
            <person name="Albarraq A."/>
            <person name="Angiuoli S."/>
            <person name="Bussey H."/>
            <person name="Bowyer P."/>
            <person name="Cotty P.J."/>
            <person name="Dyer P.S."/>
            <person name="Egan A."/>
            <person name="Galens K."/>
            <person name="Fraser-Liggett C.M."/>
            <person name="Haas B.J."/>
            <person name="Inman J.M."/>
            <person name="Kent R."/>
            <person name="Lemieux S."/>
            <person name="Malavazi I."/>
            <person name="Orvis J."/>
            <person name="Roemer T."/>
            <person name="Ronning C.M."/>
            <person name="Sundaram J.P."/>
            <person name="Sutton G."/>
            <person name="Turner G."/>
            <person name="Venter J.C."/>
            <person name="White O.R."/>
            <person name="Whitty B.R."/>
            <person name="Youngman P."/>
            <person name="Wolfe K.H."/>
            <person name="Goldman G.H."/>
            <person name="Wortman J.R."/>
            <person name="Jiang B."/>
            <person name="Denning D.W."/>
            <person name="Nierman W.C."/>
        </authorList>
    </citation>
    <scope>NUCLEOTIDE SEQUENCE [LARGE SCALE GENOMIC DNA]</scope>
    <source>
        <strain>ATCC 1007 / CBS 513.65 / DSM 816 / NCTC 3887 / NRRL 1 / QM 1276 / 107</strain>
    </source>
</reference>
<proteinExistence type="inferred from homology"/>